<proteinExistence type="evidence at protein level"/>
<gene>
    <name evidence="11" type="primary">af480</name>
    <name evidence="12" type="synonym">fmaF</name>
    <name type="ORF">AFUA_8G00480</name>
</gene>
<feature type="chain" id="PRO_0000437046" description="Dioxygenase af480">
    <location>
        <begin position="1"/>
        <end position="309"/>
    </location>
</feature>
<feature type="binding site" evidence="1">
    <location>
        <position position="153"/>
    </location>
    <ligand>
        <name>Fe cation</name>
        <dbReference type="ChEBI" id="CHEBI:24875"/>
    </ligand>
</feature>
<feature type="binding site" evidence="1">
    <location>
        <position position="155"/>
    </location>
    <ligand>
        <name>Fe cation</name>
        <dbReference type="ChEBI" id="CHEBI:24875"/>
    </ligand>
</feature>
<feature type="binding site" evidence="1">
    <location>
        <position position="228"/>
    </location>
    <ligand>
        <name>Fe cation</name>
        <dbReference type="ChEBI" id="CHEBI:24875"/>
    </ligand>
</feature>
<protein>
    <recommendedName>
        <fullName evidence="13">Dioxygenase af480</fullName>
        <ecNumber evidence="8">1.14.11.82</ecNumber>
    </recommendedName>
    <alternativeName>
        <fullName evidence="14">5-dehydro-6-demethoxyfumagillol dioxygenase</fullName>
    </alternativeName>
    <alternativeName>
        <fullName evidence="13">Fumagillin biosynthesis cluster C-6 hydroxylase</fullName>
        <shortName evidence="13">Fma-C6H</shortName>
    </alternativeName>
</protein>
<reference key="1">
    <citation type="journal article" date="2005" name="Nature">
        <title>Genomic sequence of the pathogenic and allergenic filamentous fungus Aspergillus fumigatus.</title>
        <authorList>
            <person name="Nierman W.C."/>
            <person name="Pain A."/>
            <person name="Anderson M.J."/>
            <person name="Wortman J.R."/>
            <person name="Kim H.S."/>
            <person name="Arroyo J."/>
            <person name="Berriman M."/>
            <person name="Abe K."/>
            <person name="Archer D.B."/>
            <person name="Bermejo C."/>
            <person name="Bennett J.W."/>
            <person name="Bowyer P."/>
            <person name="Chen D."/>
            <person name="Collins M."/>
            <person name="Coulsen R."/>
            <person name="Davies R."/>
            <person name="Dyer P.S."/>
            <person name="Farman M.L."/>
            <person name="Fedorova N."/>
            <person name="Fedorova N.D."/>
            <person name="Feldblyum T.V."/>
            <person name="Fischer R."/>
            <person name="Fosker N."/>
            <person name="Fraser A."/>
            <person name="Garcia J.L."/>
            <person name="Garcia M.J."/>
            <person name="Goble A."/>
            <person name="Goldman G.H."/>
            <person name="Gomi K."/>
            <person name="Griffith-Jones S."/>
            <person name="Gwilliam R."/>
            <person name="Haas B.J."/>
            <person name="Haas H."/>
            <person name="Harris D.E."/>
            <person name="Horiuchi H."/>
            <person name="Huang J."/>
            <person name="Humphray S."/>
            <person name="Jimenez J."/>
            <person name="Keller N."/>
            <person name="Khouri H."/>
            <person name="Kitamoto K."/>
            <person name="Kobayashi T."/>
            <person name="Konzack S."/>
            <person name="Kulkarni R."/>
            <person name="Kumagai T."/>
            <person name="Lafton A."/>
            <person name="Latge J.-P."/>
            <person name="Li W."/>
            <person name="Lord A."/>
            <person name="Lu C."/>
            <person name="Majoros W.H."/>
            <person name="May G.S."/>
            <person name="Miller B.L."/>
            <person name="Mohamoud Y."/>
            <person name="Molina M."/>
            <person name="Monod M."/>
            <person name="Mouyna I."/>
            <person name="Mulligan S."/>
            <person name="Murphy L.D."/>
            <person name="O'Neil S."/>
            <person name="Paulsen I."/>
            <person name="Penalva M.A."/>
            <person name="Pertea M."/>
            <person name="Price C."/>
            <person name="Pritchard B.L."/>
            <person name="Quail M.A."/>
            <person name="Rabbinowitsch E."/>
            <person name="Rawlins N."/>
            <person name="Rajandream M.A."/>
            <person name="Reichard U."/>
            <person name="Renauld H."/>
            <person name="Robson G.D."/>
            <person name="Rodriguez de Cordoba S."/>
            <person name="Rodriguez-Pena J.M."/>
            <person name="Ronning C.M."/>
            <person name="Rutter S."/>
            <person name="Salzberg S.L."/>
            <person name="Sanchez M."/>
            <person name="Sanchez-Ferrero J.C."/>
            <person name="Saunders D."/>
            <person name="Seeger K."/>
            <person name="Squares R."/>
            <person name="Squares S."/>
            <person name="Takeuchi M."/>
            <person name="Tekaia F."/>
            <person name="Turner G."/>
            <person name="Vazquez de Aldana C.R."/>
            <person name="Weidman J."/>
            <person name="White O."/>
            <person name="Woodward J.R."/>
            <person name="Yu J.-H."/>
            <person name="Fraser C.M."/>
            <person name="Galagan J.E."/>
            <person name="Asai K."/>
            <person name="Machida M."/>
            <person name="Hall N."/>
            <person name="Barrell B.G."/>
            <person name="Denning D.W."/>
        </authorList>
    </citation>
    <scope>NUCLEOTIDE SEQUENCE [LARGE SCALE GENOMIC DNA]</scope>
    <source>
        <strain>ATCC MYA-4609 / CBS 101355 / FGSC A1100 / Af293</strain>
    </source>
</reference>
<reference key="2">
    <citation type="journal article" date="1952" name="Science">
        <title>The treatment of amebiasis with fumagillin.</title>
        <authorList>
            <person name="Killough J.H."/>
            <person name="Magill G.B."/>
            <person name="Smith R.C."/>
        </authorList>
    </citation>
    <scope>BIOTECHNOLOGY</scope>
</reference>
<reference key="3">
    <citation type="journal article" date="1997" name="Proc. Natl. Acad. Sci. U.S.A.">
        <title>The anti-angiogenic agent fumagillin covalently binds and inhibits the methionine aminopeptidase, MetAP-2.</title>
        <authorList>
            <person name="Sin N."/>
            <person name="Meng L."/>
            <person name="Wang M.Q."/>
            <person name="Wen J.J."/>
            <person name="Bornmann W.G."/>
            <person name="Crews C.M."/>
        </authorList>
    </citation>
    <scope>BIOTECHNOLOGY</scope>
</reference>
<reference key="4">
    <citation type="journal article" date="2002" name="N. Engl. J. Med.">
        <title>Fumagillin treatment of intestinal microsporidiosis.</title>
        <authorList>
            <consortium name="Agence Nationale de Recherches sur le SIDA 090 Study Group"/>
            <person name="Molina J.M."/>
            <person name="Tourneur M."/>
            <person name="Sarfati C."/>
            <person name="Chevret S."/>
            <person name="de Gouvello A."/>
            <person name="Gobert J.G."/>
            <person name="Balkan S."/>
            <person name="Derouin F."/>
        </authorList>
    </citation>
    <scope>BIOTECHNOLOGY</scope>
</reference>
<reference key="5">
    <citation type="journal article" date="2008" name="Inflamm. Res.">
        <title>An inhibitor of methionine aminopeptidase type-2, PPI-2458, ameliorates the pathophysiological disease processes of rheumatoid arthritis.</title>
        <authorList>
            <person name="Lazarus D.D."/>
            <person name="Doyle E.G."/>
            <person name="Bernier S.G."/>
            <person name="Rogers A.B."/>
            <person name="Labenski M.T."/>
            <person name="Wakefield J.D."/>
            <person name="Karp R.M."/>
            <person name="Clark E.J."/>
            <person name="Lorusso J."/>
            <person name="Hoyt J.G."/>
            <person name="Thompson C.D."/>
            <person name="Hannig G."/>
            <person name="Westlin W.F."/>
        </authorList>
    </citation>
    <scope>BIOTECHNOLOGY</scope>
</reference>
<reference key="6">
    <citation type="journal article" date="2013" name="J. Am. Chem. Soc.">
        <title>The fumagillin biosynthetic gene cluster in Aspergillus fumigatus encodes a cryptic terpene cyclase involved in the formation of beta-trans-bergamotene.</title>
        <authorList>
            <person name="Lin H.C."/>
            <person name="Chooi Y.H."/>
            <person name="Dhingra S."/>
            <person name="Xu W."/>
            <person name="Calvo A.M."/>
            <person name="Tang Y."/>
        </authorList>
    </citation>
    <scope>FUNCTION</scope>
</reference>
<reference key="7">
    <citation type="journal article" date="2013" name="PLoS ONE">
        <title>The fumagillin gene cluster, an example of hundreds of genes under veA control in Aspergillus fumigatus.</title>
        <authorList>
            <person name="Dhingra S."/>
            <person name="Lind A.L."/>
            <person name="Lin H.C."/>
            <person name="Tang Y."/>
            <person name="Rokas A."/>
            <person name="Calvo A.M."/>
        </authorList>
    </citation>
    <scope>INDUCTION</scope>
</reference>
<reference key="8">
    <citation type="journal article" date="2013" name="Proc. Natl. Acad. Sci. U.S.A.">
        <title>Prototype of an intertwined secondary-metabolite supercluster.</title>
        <authorList>
            <person name="Wiemann P."/>
            <person name="Guo C.J."/>
            <person name="Palmer J.M."/>
            <person name="Sekonyela R."/>
            <person name="Wang C.C."/>
            <person name="Keller N.P."/>
        </authorList>
    </citation>
    <scope>IDENTIFICATION</scope>
    <scope>INDUCTION</scope>
    <scope>DISRUPTION PHENOTYPE</scope>
</reference>
<reference key="9">
    <citation type="journal article" date="2014" name="J. Am. Chem. Soc.">
        <title>Generation of complexity in fungal terpene biosynthesis: discovery of a multifunctional cytochrome P450 in the fumagillin pathway.</title>
        <authorList>
            <person name="Lin H.C."/>
            <person name="Tsunematsu Y."/>
            <person name="Dhingra S."/>
            <person name="Xu W."/>
            <person name="Fukutomi M."/>
            <person name="Chooi Y.H."/>
            <person name="Cane D.E."/>
            <person name="Calvo A.M."/>
            <person name="Watanabe K."/>
            <person name="Tang Y."/>
        </authorList>
    </citation>
    <scope>FUNCTION</scope>
    <scope>DISRUPTION PHENOTYPE</scope>
    <scope>CATALYTIC ACTIVITY</scope>
</reference>
<reference key="10">
    <citation type="journal article" date="2018" name="Virulence">
        <title>A possible role for fumagillin in cellular damage during host infection by Aspergillus fumigatus.</title>
        <authorList>
            <person name="Guruceaga X."/>
            <person name="Ezpeleta G."/>
            <person name="Mayayo E."/>
            <person name="Sueiro-Olivares M."/>
            <person name="Abad-Diaz-De-Cerio A."/>
            <person name="Aguirre Urizar J.M."/>
            <person name="Liu H.G."/>
            <person name="Wiemann P."/>
            <person name="Bok J.W."/>
            <person name="Filler S.G."/>
            <person name="Keller N.P."/>
            <person name="Hernando F.L."/>
            <person name="Ramirez-Garcia A."/>
            <person name="Rementeria A."/>
        </authorList>
    </citation>
    <scope>INDUCTION</scope>
</reference>
<comment type="function">
    <text evidence="5 8 15">Dioxygenase; part of the gene cluster that mediates the biosynthesis of fumagillin, a meroterpenoid that has numerous biological activities including irreversible inhibition of human type 2 methionine aminopeptidase (METAP2) (PubMed:23488861, PubMed:24568283). Within the pathway, the dioxygenase af480 acts as a 5-dehydro-6-demethoxyfumagillol dioxygenase that hydroylates 5-keto-demethoxyfumagillol at position C-6 (PubMed:24568283). The pathway begins with the conversion of farnesyl pyrophosphate (FPP) to beta-trans-bergamotene by the membrane-bound beta-trans-bergamotene synthase af520. The multifunctional cytochrome P450 monooxygenase af510 then converts beta-trans-bergamotene into 5-keto-demethoxyfumagillol via several oxydation steps. 5-keto-demethoxyfumagillol is then subjected to successive C-6 hydroxylation and O-methylation by the dioxygenase af480 and O-methyltransferase af390-400, respectively, to yield 5-keto-fumagillol, which is then stereoselectively reduced by the keto-reductase af490 to 5R-hydroxy-seco-sesquiterpene. The next step is the polyketide transferase af380-catalyzed transfer of a dodecapentaenoyl group synthesized by the polyketide synthase af370 onto 5R-hydroxy-seco-sesquiterpene which leads to the production of prefumagillin. Finally, oxidative cleavage by the monooxygenase af470 converts prefumagillin to fumagillin (Probable) (PubMed:24568283).</text>
</comment>
<comment type="catalytic activity">
    <reaction evidence="8">
        <text>5-dehydro-6-demethoxyfumagillol + 2-oxoglutarate + O2 = 5-dehydro-6-demethoxy-6-hydroxyfumagillol + succinate + CO2</text>
        <dbReference type="Rhea" id="RHEA:74635"/>
        <dbReference type="ChEBI" id="CHEBI:15379"/>
        <dbReference type="ChEBI" id="CHEBI:16526"/>
        <dbReference type="ChEBI" id="CHEBI:16810"/>
        <dbReference type="ChEBI" id="CHEBI:30031"/>
        <dbReference type="ChEBI" id="CHEBI:193517"/>
        <dbReference type="ChEBI" id="CHEBI:193518"/>
        <dbReference type="EC" id="1.14.11.82"/>
    </reaction>
    <physiologicalReaction direction="left-to-right" evidence="8">
        <dbReference type="Rhea" id="RHEA:74636"/>
    </physiologicalReaction>
</comment>
<comment type="cofactor">
    <cofactor evidence="1">
        <name>Fe cation</name>
        <dbReference type="ChEBI" id="CHEBI:24875"/>
    </cofactor>
</comment>
<comment type="pathway">
    <text evidence="8">Secondary metabolite biosynthesis; terpenoid biosynthesis.</text>
</comment>
<comment type="induction">
    <text evidence="6 7 9">Expression is controlled by the fumagillin biosynthesis cluster regulator fumR (PubMed:24082142). Expression is also under the control of the developmental and secondary metabolism regulator veA (PubMed:24116213). Expression is significantly up-regulated during infection (PubMed:30251593).</text>
</comment>
<comment type="disruption phenotype">
    <text evidence="6 8">Completely abolishes the production of fumagillin but leads to the accumulation of the intermediate 6-demethoxyfumagillin (PubMed:24082142, PubMed:24568283).</text>
</comment>
<comment type="biotechnology">
    <text evidence="2 3 4 10">Fumagillin and its derivatives have been intensely studied for their potential use in the treatment of amebiasis, microsporidiosis and rheumatoid arthritis (PubMed:12075057, PubMed:14913169, PubMed:18209961). They have also interesting antiangiogenic properties by the irreversible inhibition of human type 2 methionine aminopeptidase (METAP2) (PubMed:9177176).</text>
</comment>
<comment type="similarity">
    <text evidence="14">Belongs to the PhyH family.</text>
</comment>
<evidence type="ECO:0000250" key="1">
    <source>
        <dbReference type="UniProtKB" id="O14832"/>
    </source>
</evidence>
<evidence type="ECO:0000269" key="2">
    <source>
    </source>
</evidence>
<evidence type="ECO:0000269" key="3">
    <source>
    </source>
</evidence>
<evidence type="ECO:0000269" key="4">
    <source>
    </source>
</evidence>
<evidence type="ECO:0000269" key="5">
    <source>
    </source>
</evidence>
<evidence type="ECO:0000269" key="6">
    <source>
    </source>
</evidence>
<evidence type="ECO:0000269" key="7">
    <source>
    </source>
</evidence>
<evidence type="ECO:0000269" key="8">
    <source>
    </source>
</evidence>
<evidence type="ECO:0000269" key="9">
    <source>
    </source>
</evidence>
<evidence type="ECO:0000269" key="10">
    <source>
    </source>
</evidence>
<evidence type="ECO:0000303" key="11">
    <source>
    </source>
</evidence>
<evidence type="ECO:0000303" key="12">
    <source>
    </source>
</evidence>
<evidence type="ECO:0000303" key="13">
    <source>
    </source>
</evidence>
<evidence type="ECO:0000305" key="14"/>
<evidence type="ECO:0000305" key="15">
    <source>
    </source>
</evidence>
<organism>
    <name type="scientific">Aspergillus fumigatus (strain ATCC MYA-4609 / CBS 101355 / FGSC A1100 / Af293)</name>
    <name type="common">Neosartorya fumigata</name>
    <dbReference type="NCBI Taxonomy" id="330879"/>
    <lineage>
        <taxon>Eukaryota</taxon>
        <taxon>Fungi</taxon>
        <taxon>Dikarya</taxon>
        <taxon>Ascomycota</taxon>
        <taxon>Pezizomycotina</taxon>
        <taxon>Eurotiomycetes</taxon>
        <taxon>Eurotiomycetidae</taxon>
        <taxon>Eurotiales</taxon>
        <taxon>Aspergillaceae</taxon>
        <taxon>Aspergillus</taxon>
        <taxon>Aspergillus subgen. Fumigati</taxon>
    </lineage>
</organism>
<name>FMAF_ASPFU</name>
<keyword id="KW-0223">Dioxygenase</keyword>
<keyword id="KW-0408">Iron</keyword>
<keyword id="KW-0479">Metal-binding</keyword>
<keyword id="KW-0560">Oxidoreductase</keyword>
<keyword id="KW-1185">Reference proteome</keyword>
<accession>Q4WAZ3</accession>
<dbReference type="EC" id="1.14.11.82" evidence="8"/>
<dbReference type="EMBL" id="AAHF01000014">
    <property type="protein sequence ID" value="EAL85119.2"/>
    <property type="molecule type" value="Genomic_DNA"/>
</dbReference>
<dbReference type="RefSeq" id="XP_747157.2">
    <property type="nucleotide sequence ID" value="XM_742064.2"/>
</dbReference>
<dbReference type="SMR" id="Q4WAZ3"/>
<dbReference type="STRING" id="330879.Q4WAZ3"/>
<dbReference type="EnsemblFungi" id="EAL85119">
    <property type="protein sequence ID" value="EAL85119"/>
    <property type="gene ID" value="AFUA_8G00480"/>
</dbReference>
<dbReference type="GeneID" id="3504545"/>
<dbReference type="KEGG" id="afm:AFUA_8G00480"/>
<dbReference type="VEuPathDB" id="FungiDB:Afu8g00480"/>
<dbReference type="eggNOG" id="ENOG502SKX1">
    <property type="taxonomic scope" value="Eukaryota"/>
</dbReference>
<dbReference type="HOGENOM" id="CLU_047725_3_1_1"/>
<dbReference type="InParanoid" id="Q4WAZ3"/>
<dbReference type="OMA" id="NVIWCLT"/>
<dbReference type="OrthoDB" id="445007at2759"/>
<dbReference type="BioCyc" id="MetaCyc:MONOMER-124254"/>
<dbReference type="UniPathway" id="UPA00213"/>
<dbReference type="Proteomes" id="UP000002530">
    <property type="component" value="Chromosome 8"/>
</dbReference>
<dbReference type="GO" id="GO:0051213">
    <property type="term" value="F:dioxygenase activity"/>
    <property type="evidence" value="ECO:0007669"/>
    <property type="project" value="UniProtKB-KW"/>
</dbReference>
<dbReference type="GO" id="GO:0046872">
    <property type="term" value="F:metal ion binding"/>
    <property type="evidence" value="ECO:0007669"/>
    <property type="project" value="UniProtKB-KW"/>
</dbReference>
<dbReference type="GO" id="GO:1902086">
    <property type="term" value="P:fumagillin biosynthetic process"/>
    <property type="evidence" value="ECO:0000317"/>
    <property type="project" value="AspGD"/>
</dbReference>
<dbReference type="GO" id="GO:0016114">
    <property type="term" value="P:terpenoid biosynthetic process"/>
    <property type="evidence" value="ECO:0007669"/>
    <property type="project" value="UniProtKB-UniPathway"/>
</dbReference>
<dbReference type="FunFam" id="2.60.120.620:FF:000040">
    <property type="entry name" value="Phytanoyl-CoA dioxygenase, putative"/>
    <property type="match status" value="1"/>
</dbReference>
<dbReference type="Gene3D" id="2.60.120.620">
    <property type="entry name" value="q2cbj1_9rhob like domain"/>
    <property type="match status" value="1"/>
</dbReference>
<dbReference type="InterPro" id="IPR008775">
    <property type="entry name" value="Phytyl_CoA_dOase-like"/>
</dbReference>
<dbReference type="PANTHER" id="PTHR20883:SF48">
    <property type="entry name" value="ECTOINE DIOXYGENASE"/>
    <property type="match status" value="1"/>
</dbReference>
<dbReference type="PANTHER" id="PTHR20883">
    <property type="entry name" value="PHYTANOYL-COA DIOXYGENASE DOMAIN CONTAINING 1"/>
    <property type="match status" value="1"/>
</dbReference>
<dbReference type="Pfam" id="PF05721">
    <property type="entry name" value="PhyH"/>
    <property type="match status" value="1"/>
</dbReference>
<dbReference type="SUPFAM" id="SSF51197">
    <property type="entry name" value="Clavaminate synthase-like"/>
    <property type="match status" value="1"/>
</dbReference>
<sequence>MLGRHECTISESVSALDPTAQEPEYTLVPSTSRDLVRDMTLNMEDAQAHLKEHGWVKIPAVLSKAEAEDALSRLWEAKAASEARGECTFQPILDPNPANVRVFYLPELDAYWRDMLVNPTALDLAKSLLGDQLLVSNFSANIARPGAESMALHSDQSIVLPAPWLDVWAVNVIWCLTRMTKENGATLYIPGSNKWTTWEDVPDNAPDLLVPFEADAGDIVVIDGRLWHTSGSNVTEDEDRAILFAYYSAPHMRPLTNWSAKLPKELQETLSPQLKELLALSHIGYVVKGDLTYMAQKYPSEKGTTAVSA</sequence>